<feature type="chain" id="PRO_1000187654" description="Membrane protein insertase YidC">
    <location>
        <begin position="1"/>
        <end position="559"/>
    </location>
</feature>
<feature type="transmembrane region" description="Helical" evidence="1">
    <location>
        <begin position="7"/>
        <end position="24"/>
    </location>
</feature>
<feature type="transmembrane region" description="Helical" evidence="1">
    <location>
        <begin position="338"/>
        <end position="358"/>
    </location>
</feature>
<feature type="transmembrane region" description="Helical" evidence="1">
    <location>
        <begin position="364"/>
        <end position="384"/>
    </location>
</feature>
<feature type="transmembrane region" description="Helical" evidence="1">
    <location>
        <begin position="434"/>
        <end position="454"/>
    </location>
</feature>
<feature type="transmembrane region" description="Helical" evidence="1">
    <location>
        <begin position="472"/>
        <end position="492"/>
    </location>
</feature>
<feature type="transmembrane region" description="Helical" evidence="1">
    <location>
        <begin position="507"/>
        <end position="527"/>
    </location>
</feature>
<feature type="region of interest" description="Disordered" evidence="2">
    <location>
        <begin position="45"/>
        <end position="82"/>
    </location>
</feature>
<feature type="compositionally biased region" description="Low complexity" evidence="2">
    <location>
        <begin position="45"/>
        <end position="55"/>
    </location>
</feature>
<feature type="compositionally biased region" description="Low complexity" evidence="2">
    <location>
        <begin position="63"/>
        <end position="82"/>
    </location>
</feature>
<gene>
    <name evidence="1" type="primary">yidC</name>
    <name type="ordered locus">RALTA_A3217</name>
</gene>
<protein>
    <recommendedName>
        <fullName evidence="1">Membrane protein insertase YidC</fullName>
    </recommendedName>
    <alternativeName>
        <fullName evidence="1">Foldase YidC</fullName>
    </alternativeName>
    <alternativeName>
        <fullName evidence="1">Membrane integrase YidC</fullName>
    </alternativeName>
    <alternativeName>
        <fullName evidence="1">Membrane protein YidC</fullName>
    </alternativeName>
</protein>
<keyword id="KW-0997">Cell inner membrane</keyword>
<keyword id="KW-1003">Cell membrane</keyword>
<keyword id="KW-0143">Chaperone</keyword>
<keyword id="KW-0472">Membrane</keyword>
<keyword id="KW-0653">Protein transport</keyword>
<keyword id="KW-0812">Transmembrane</keyword>
<keyword id="KW-1133">Transmembrane helix</keyword>
<keyword id="KW-0813">Transport</keyword>
<evidence type="ECO:0000255" key="1">
    <source>
        <dbReference type="HAMAP-Rule" id="MF_01810"/>
    </source>
</evidence>
<evidence type="ECO:0000256" key="2">
    <source>
        <dbReference type="SAM" id="MobiDB-lite"/>
    </source>
</evidence>
<dbReference type="EMBL" id="CU633749">
    <property type="protein sequence ID" value="CAQ71133.1"/>
    <property type="molecule type" value="Genomic_DNA"/>
</dbReference>
<dbReference type="RefSeq" id="WP_012354398.1">
    <property type="nucleotide sequence ID" value="NC_010528.1"/>
</dbReference>
<dbReference type="SMR" id="B3R883"/>
<dbReference type="GeneID" id="29762760"/>
<dbReference type="KEGG" id="cti:RALTA_A3217"/>
<dbReference type="eggNOG" id="COG0706">
    <property type="taxonomic scope" value="Bacteria"/>
</dbReference>
<dbReference type="HOGENOM" id="CLU_016535_3_0_4"/>
<dbReference type="BioCyc" id="CTAI977880:RALTA_RS15725-MONOMER"/>
<dbReference type="Proteomes" id="UP000001692">
    <property type="component" value="Chromosome 1"/>
</dbReference>
<dbReference type="GO" id="GO:0005886">
    <property type="term" value="C:plasma membrane"/>
    <property type="evidence" value="ECO:0007669"/>
    <property type="project" value="UniProtKB-SubCell"/>
</dbReference>
<dbReference type="GO" id="GO:0032977">
    <property type="term" value="F:membrane insertase activity"/>
    <property type="evidence" value="ECO:0007669"/>
    <property type="project" value="InterPro"/>
</dbReference>
<dbReference type="GO" id="GO:0051205">
    <property type="term" value="P:protein insertion into membrane"/>
    <property type="evidence" value="ECO:0007669"/>
    <property type="project" value="TreeGrafter"/>
</dbReference>
<dbReference type="GO" id="GO:0015031">
    <property type="term" value="P:protein transport"/>
    <property type="evidence" value="ECO:0007669"/>
    <property type="project" value="UniProtKB-KW"/>
</dbReference>
<dbReference type="CDD" id="cd20070">
    <property type="entry name" value="5TM_YidC_Alb3"/>
    <property type="match status" value="1"/>
</dbReference>
<dbReference type="CDD" id="cd19961">
    <property type="entry name" value="EcYidC-like_peri"/>
    <property type="match status" value="1"/>
</dbReference>
<dbReference type="Gene3D" id="2.70.98.90">
    <property type="match status" value="1"/>
</dbReference>
<dbReference type="HAMAP" id="MF_01810">
    <property type="entry name" value="YidC_type1"/>
    <property type="match status" value="1"/>
</dbReference>
<dbReference type="InterPro" id="IPR019998">
    <property type="entry name" value="Membr_insert_YidC"/>
</dbReference>
<dbReference type="InterPro" id="IPR028053">
    <property type="entry name" value="Membr_insert_YidC_N"/>
</dbReference>
<dbReference type="InterPro" id="IPR001708">
    <property type="entry name" value="YidC/ALB3/OXA1/COX18"/>
</dbReference>
<dbReference type="InterPro" id="IPR028055">
    <property type="entry name" value="YidC/Oxa/ALB_C"/>
</dbReference>
<dbReference type="InterPro" id="IPR047196">
    <property type="entry name" value="YidC_ALB_C"/>
</dbReference>
<dbReference type="InterPro" id="IPR038221">
    <property type="entry name" value="YidC_periplasmic_sf"/>
</dbReference>
<dbReference type="NCBIfam" id="NF002352">
    <property type="entry name" value="PRK01318.1-3"/>
    <property type="match status" value="1"/>
</dbReference>
<dbReference type="NCBIfam" id="TIGR03593">
    <property type="entry name" value="yidC_nterm"/>
    <property type="match status" value="1"/>
</dbReference>
<dbReference type="NCBIfam" id="TIGR03592">
    <property type="entry name" value="yidC_oxa1_cterm"/>
    <property type="match status" value="1"/>
</dbReference>
<dbReference type="PANTHER" id="PTHR12428:SF65">
    <property type="entry name" value="CYTOCHROME C OXIDASE ASSEMBLY PROTEIN COX18, MITOCHONDRIAL"/>
    <property type="match status" value="1"/>
</dbReference>
<dbReference type="PANTHER" id="PTHR12428">
    <property type="entry name" value="OXA1"/>
    <property type="match status" value="1"/>
</dbReference>
<dbReference type="Pfam" id="PF02096">
    <property type="entry name" value="60KD_IMP"/>
    <property type="match status" value="1"/>
</dbReference>
<dbReference type="Pfam" id="PF14849">
    <property type="entry name" value="YidC_periplas"/>
    <property type="match status" value="1"/>
</dbReference>
<dbReference type="PRINTS" id="PR00701">
    <property type="entry name" value="60KDINNERMP"/>
</dbReference>
<dbReference type="PRINTS" id="PR01900">
    <property type="entry name" value="YIDCPROTEIN"/>
</dbReference>
<organism>
    <name type="scientific">Cupriavidus taiwanensis (strain DSM 17343 / BCRC 17206 / CCUG 44338 / CIP 107171 / LMG 19424 / R1)</name>
    <name type="common">Ralstonia taiwanensis (strain LMG 19424)</name>
    <dbReference type="NCBI Taxonomy" id="977880"/>
    <lineage>
        <taxon>Bacteria</taxon>
        <taxon>Pseudomonadati</taxon>
        <taxon>Pseudomonadota</taxon>
        <taxon>Betaproteobacteria</taxon>
        <taxon>Burkholderiales</taxon>
        <taxon>Burkholderiaceae</taxon>
        <taxon>Cupriavidus</taxon>
    </lineage>
</organism>
<accession>B3R883</accession>
<comment type="function">
    <text evidence="1">Required for the insertion and/or proper folding and/or complex formation of integral membrane proteins into the membrane. Involved in integration of membrane proteins that insert both dependently and independently of the Sec translocase complex, as well as at least some lipoproteins. Aids folding of multispanning membrane proteins.</text>
</comment>
<comment type="subunit">
    <text evidence="1">Interacts with the Sec translocase complex via SecD. Specifically interacts with transmembrane segments of nascent integral membrane proteins during membrane integration.</text>
</comment>
<comment type="subcellular location">
    <subcellularLocation>
        <location evidence="1">Cell inner membrane</location>
        <topology evidence="1">Multi-pass membrane protein</topology>
    </subcellularLocation>
</comment>
<comment type="similarity">
    <text evidence="1">Belongs to the OXA1/ALB3/YidC family. Type 1 subfamily.</text>
</comment>
<proteinExistence type="inferred from homology"/>
<reference key="1">
    <citation type="journal article" date="2008" name="Genome Res.">
        <title>Genome sequence of the beta-rhizobium Cupriavidus taiwanensis and comparative genomics of rhizobia.</title>
        <authorList>
            <person name="Amadou C."/>
            <person name="Pascal G."/>
            <person name="Mangenot S."/>
            <person name="Glew M."/>
            <person name="Bontemps C."/>
            <person name="Capela D."/>
            <person name="Carrere S."/>
            <person name="Cruveiller S."/>
            <person name="Dossat C."/>
            <person name="Lajus A."/>
            <person name="Marchetti M."/>
            <person name="Poinsot V."/>
            <person name="Rouy Z."/>
            <person name="Servin B."/>
            <person name="Saad M."/>
            <person name="Schenowitz C."/>
            <person name="Barbe V."/>
            <person name="Batut J."/>
            <person name="Medigue C."/>
            <person name="Masson-Boivin C."/>
        </authorList>
    </citation>
    <scope>NUCLEOTIDE SEQUENCE [LARGE SCALE GENOMIC DNA]</scope>
    <source>
        <strain>DSM 17343 / BCRC 17206 / CCUG 44338 / CIP 107171 / LMG 19424 / R1</strain>
    </source>
</reference>
<sequence>MDIKRTILWVIFSMSLVLLYDNWQRANGHASMFFPSTTQQQAASAPAASGAAAQGDVPKANVQPATGTSAAPAAGAAPQAAAQPTGEKIVVTTDTVRAEIDTAGGIVSRLELLKEHEKDGKPVVLFERDNVRTYMARSGLIGGDLPNHTTVFTAAPGPRALDGAEQVQVVLTGEKNGVKLVKTYTFRKGSYVVDSKFDVTNAGTAPVSPTLYLELARDGSKVEQSQFYSTFTGPAIYTDADKYHKLSFEDIAKGKATVPAAANNGWVAMVQHYFASAWIPQTGKEHSFYVQQIDPNLYRVGIQQPLGELAPGATVSTDARLFAGPQEEHMLEKIAPGLELVKDYGWLTILAKPLFWLLEKLHGFLGNWGWSIIALTVLIKLVFFPLSAASYKSMGKMKDLQPRMTSIRERYKNDPQKMNQEMMALYRTEKVNPLGGCLPIVIQIPVFIALYWVLLSSVEMRGAPWLGWIHDLSVPDPFYILPIVMAVSMFVQTKLNPTPPDPVQAKVMMIMPLVFSVMFFFFPAGLVLYWVVNNILSIAQQWQINRMLGKGKAAVVAKS</sequence>
<name>YIDC_CUPTR</name>